<comment type="function">
    <text evidence="1">Probably mediates the hydrolysis of some nucleoside diphosphate derivatives.</text>
</comment>
<comment type="cofactor">
    <cofactor evidence="1">
        <name>Mn(2+)</name>
        <dbReference type="ChEBI" id="CHEBI:29035"/>
    </cofactor>
    <cofactor evidence="1">
        <name>Mg(2+)</name>
        <dbReference type="ChEBI" id="CHEBI:18420"/>
    </cofactor>
</comment>
<comment type="similarity">
    <text evidence="1">Belongs to the Nudix hydrolase family. PCD1 subfamily.</text>
</comment>
<evidence type="ECO:0000255" key="1">
    <source>
        <dbReference type="HAMAP-Rule" id="MF_01592"/>
    </source>
</evidence>
<reference key="1">
    <citation type="journal article" date="1996" name="DNA Res.">
        <title>A 460-kb DNA sequence of the Escherichia coli K-12 genome corresponding to the 40.1-50.0 min region on the linkage map.</title>
        <authorList>
            <person name="Itoh T."/>
            <person name="Aiba H."/>
            <person name="Baba T."/>
            <person name="Fujita K."/>
            <person name="Hayashi K."/>
            <person name="Inada T."/>
            <person name="Isono K."/>
            <person name="Kasai H."/>
            <person name="Kimura S."/>
            <person name="Kitakawa M."/>
            <person name="Kitagawa M."/>
            <person name="Makino K."/>
            <person name="Miki T."/>
            <person name="Mizobuchi K."/>
            <person name="Mori H."/>
            <person name="Mori T."/>
            <person name="Motomura K."/>
            <person name="Nakade S."/>
            <person name="Nakamura Y."/>
            <person name="Nashimoto H."/>
            <person name="Nishio Y."/>
            <person name="Oshima T."/>
            <person name="Saito N."/>
            <person name="Sampei G."/>
            <person name="Seki Y."/>
            <person name="Sivasundaram S."/>
            <person name="Tagami H."/>
            <person name="Takeda J."/>
            <person name="Takemoto K."/>
            <person name="Wada C."/>
            <person name="Yamamoto Y."/>
            <person name="Horiuchi T."/>
        </authorList>
    </citation>
    <scope>NUCLEOTIDE SEQUENCE [LARGE SCALE GENOMIC DNA]</scope>
    <source>
        <strain>K12 / W3110 / ATCC 27325 / DSM 5911</strain>
    </source>
</reference>
<reference key="2">
    <citation type="journal article" date="1997" name="Science">
        <title>The complete genome sequence of Escherichia coli K-12.</title>
        <authorList>
            <person name="Blattner F.R."/>
            <person name="Plunkett G. III"/>
            <person name="Bloch C.A."/>
            <person name="Perna N.T."/>
            <person name="Burland V."/>
            <person name="Riley M."/>
            <person name="Collado-Vides J."/>
            <person name="Glasner J.D."/>
            <person name="Rode C.K."/>
            <person name="Mayhew G.F."/>
            <person name="Gregor J."/>
            <person name="Davis N.W."/>
            <person name="Kirkpatrick H.A."/>
            <person name="Goeden M.A."/>
            <person name="Rose D.J."/>
            <person name="Mau B."/>
            <person name="Shao Y."/>
        </authorList>
    </citation>
    <scope>NUCLEOTIDE SEQUENCE [LARGE SCALE GENOMIC DNA]</scope>
    <source>
        <strain>K12 / MG1655 / ATCC 47076</strain>
    </source>
</reference>
<reference key="3">
    <citation type="journal article" date="2006" name="Mol. Syst. Biol.">
        <title>Highly accurate genome sequences of Escherichia coli K-12 strains MG1655 and W3110.</title>
        <authorList>
            <person name="Hayashi K."/>
            <person name="Morooka N."/>
            <person name="Yamamoto Y."/>
            <person name="Fujita K."/>
            <person name="Isono K."/>
            <person name="Choi S."/>
            <person name="Ohtsubo E."/>
            <person name="Baba T."/>
            <person name="Wanner B.L."/>
            <person name="Mori H."/>
            <person name="Horiuchi T."/>
        </authorList>
    </citation>
    <scope>NUCLEOTIDE SEQUENCE [LARGE SCALE GENOMIC DNA]</scope>
    <source>
        <strain>K12 / W3110 / ATCC 27325 / DSM 5911</strain>
    </source>
</reference>
<reference key="4">
    <citation type="journal article" date="1984" name="J. Bacteriol.">
        <title>Nucleotide sequence of Escherichia coli pabB indicates a common evolutionary origin of p-aminobenzoate synthetase and anthranilate synthetase.</title>
        <authorList>
            <person name="Goncharoff P."/>
            <person name="Nichols B.P."/>
        </authorList>
    </citation>
    <scope>NUCLEOTIDE SEQUENCE [GENOMIC DNA] OF 1-41</scope>
</reference>
<reference key="5">
    <citation type="journal article" date="1989" name="J. Bacteriol.">
        <title>L-serine degradation in Escherichia coli K-12: cloning and sequencing of the sdaA gene.</title>
        <authorList>
            <person name="Su H."/>
            <person name="Lang B.F."/>
            <person name="Newman E.B."/>
        </authorList>
    </citation>
    <scope>NUCLEOTIDE SEQUENCE [GENOMIC DNA] OF 41-192</scope>
    <source>
        <strain>K12</strain>
    </source>
</reference>
<reference key="6">
    <citation type="journal article" date="1995" name="Nucleic Acids Res.">
        <title>Detection of new genes in a bacterial genome using Markov models for three gene classes.</title>
        <authorList>
            <person name="Borodovsky M."/>
            <person name="McIninch J."/>
            <person name="Koonin E.V."/>
            <person name="Rudd K.E."/>
            <person name="Medigue C."/>
            <person name="Danchin A."/>
        </authorList>
    </citation>
    <scope>IDENTIFICATION</scope>
</reference>
<accession>P43337</accession>
<protein>
    <recommendedName>
        <fullName evidence="1">Uncharacterized Nudix hydrolase NudL</fullName>
        <ecNumber evidence="1">3.6.1.-</ecNumber>
    </recommendedName>
</protein>
<feature type="chain" id="PRO_0000057145" description="Uncharacterized Nudix hydrolase NudL">
    <location>
        <begin position="1"/>
        <end position="192"/>
    </location>
</feature>
<feature type="domain" description="Nudix hydrolase" evidence="1">
    <location>
        <begin position="29"/>
        <end position="160"/>
    </location>
</feature>
<feature type="short sequence motif" description="Nudix box">
    <location>
        <begin position="67"/>
        <end position="89"/>
    </location>
</feature>
<feature type="binding site" evidence="1">
    <location>
        <position position="83"/>
    </location>
    <ligand>
        <name>Mg(2+)</name>
        <dbReference type="ChEBI" id="CHEBI:18420"/>
    </ligand>
</feature>
<feature type="binding site" evidence="1">
    <location>
        <position position="87"/>
    </location>
    <ligand>
        <name>Mg(2+)</name>
        <dbReference type="ChEBI" id="CHEBI:18420"/>
    </ligand>
</feature>
<sequence length="192" mass="21436">MEYRSLTLDDFLSRFQLLRPQINRETLNHRQAAVLIPIVRRPQPGLLLTQRSIHLRKHAGQVAFPGGAVDDTDASAIAAALREAEEEVAIPPSAVEVIGVLPPVDSVTGYQVTPVVGIIPPDLPYRASEDEVSAVFEMPLAQALHLGRYHPLDIYRRGDSHRVWLSWYEQYFVWGMTAGIIRELALQIGVKP</sequence>
<proteinExistence type="inferred from homology"/>
<dbReference type="EC" id="3.6.1.-" evidence="1"/>
<dbReference type="EMBL" id="U00096">
    <property type="protein sequence ID" value="AAC74883.1"/>
    <property type="molecule type" value="Genomic_DNA"/>
</dbReference>
<dbReference type="EMBL" id="AP009048">
    <property type="protein sequence ID" value="BAA15620.1"/>
    <property type="molecule type" value="Genomic_DNA"/>
</dbReference>
<dbReference type="EMBL" id="K02673">
    <property type="status" value="NOT_ANNOTATED_CDS"/>
    <property type="molecule type" value="Genomic_DNA"/>
</dbReference>
<dbReference type="EMBL" id="M28695">
    <property type="status" value="NOT_ANNOTATED_CDS"/>
    <property type="molecule type" value="Genomic_DNA"/>
</dbReference>
<dbReference type="PIR" id="E64942">
    <property type="entry name" value="E64942"/>
</dbReference>
<dbReference type="RefSeq" id="NP_416327.1">
    <property type="nucleotide sequence ID" value="NC_000913.3"/>
</dbReference>
<dbReference type="RefSeq" id="WP_000456715.1">
    <property type="nucleotide sequence ID" value="NZ_SSZK01000001.1"/>
</dbReference>
<dbReference type="SMR" id="P43337"/>
<dbReference type="BioGRID" id="4263367">
    <property type="interactions" value="40"/>
</dbReference>
<dbReference type="DIP" id="DIP-11783N"/>
<dbReference type="FunCoup" id="P43337">
    <property type="interactions" value="288"/>
</dbReference>
<dbReference type="IntAct" id="P43337">
    <property type="interactions" value="5"/>
</dbReference>
<dbReference type="STRING" id="511145.b1813"/>
<dbReference type="jPOST" id="P43337"/>
<dbReference type="PaxDb" id="511145-b1813"/>
<dbReference type="EnsemblBacteria" id="AAC74883">
    <property type="protein sequence ID" value="AAC74883"/>
    <property type="gene ID" value="b1813"/>
</dbReference>
<dbReference type="GeneID" id="946330"/>
<dbReference type="KEGG" id="ecj:JW1802"/>
<dbReference type="KEGG" id="eco:b1813"/>
<dbReference type="KEGG" id="ecoc:C3026_10325"/>
<dbReference type="PATRIC" id="fig|1411691.4.peg.439"/>
<dbReference type="EchoBASE" id="EB2556"/>
<dbReference type="eggNOG" id="COG0494">
    <property type="taxonomic scope" value="Bacteria"/>
</dbReference>
<dbReference type="HOGENOM" id="CLU_040940_5_2_6"/>
<dbReference type="InParanoid" id="P43337"/>
<dbReference type="OMA" id="YYIWGAT"/>
<dbReference type="OrthoDB" id="9802805at2"/>
<dbReference type="PhylomeDB" id="P43337"/>
<dbReference type="BioCyc" id="EcoCyc:EG12693-MONOMER"/>
<dbReference type="BioCyc" id="MetaCyc:EG12693-MONOMER"/>
<dbReference type="PRO" id="PR:P43337"/>
<dbReference type="Proteomes" id="UP000000625">
    <property type="component" value="Chromosome"/>
</dbReference>
<dbReference type="GO" id="GO:0010945">
    <property type="term" value="F:coenzyme A diphosphatase activity"/>
    <property type="evidence" value="ECO:0007669"/>
    <property type="project" value="InterPro"/>
</dbReference>
<dbReference type="GO" id="GO:0016818">
    <property type="term" value="F:hydrolase activity, acting on acid anhydrides, in phosphorus-containing anhydrides"/>
    <property type="evidence" value="ECO:0000314"/>
    <property type="project" value="EcoCyc"/>
</dbReference>
<dbReference type="GO" id="GO:0000287">
    <property type="term" value="F:magnesium ion binding"/>
    <property type="evidence" value="ECO:0007669"/>
    <property type="project" value="UniProtKB-UniRule"/>
</dbReference>
<dbReference type="GO" id="GO:0030145">
    <property type="term" value="F:manganese ion binding"/>
    <property type="evidence" value="ECO:0007669"/>
    <property type="project" value="UniProtKB-UniRule"/>
</dbReference>
<dbReference type="GO" id="GO:0009132">
    <property type="term" value="P:nucleoside diphosphate metabolic process"/>
    <property type="evidence" value="ECO:0007669"/>
    <property type="project" value="InterPro"/>
</dbReference>
<dbReference type="CDD" id="cd03426">
    <property type="entry name" value="NUDIX_CoAse_Nudt7"/>
    <property type="match status" value="1"/>
</dbReference>
<dbReference type="FunFam" id="3.90.79.10:FF:000013">
    <property type="entry name" value="Uncharacterized Nudix hydrolase NudL"/>
    <property type="match status" value="1"/>
</dbReference>
<dbReference type="Gene3D" id="3.90.79.10">
    <property type="entry name" value="Nucleoside Triphosphate Pyrophosphohydrolase"/>
    <property type="match status" value="1"/>
</dbReference>
<dbReference type="HAMAP" id="MF_01592">
    <property type="entry name" value="Nudix_NudL"/>
    <property type="match status" value="1"/>
</dbReference>
<dbReference type="InterPro" id="IPR045121">
    <property type="entry name" value="CoAse"/>
</dbReference>
<dbReference type="InterPro" id="IPR015797">
    <property type="entry name" value="NUDIX_hydrolase-like_dom_sf"/>
</dbReference>
<dbReference type="InterPro" id="IPR000086">
    <property type="entry name" value="NUDIX_hydrolase_dom"/>
</dbReference>
<dbReference type="InterPro" id="IPR000059">
    <property type="entry name" value="NUDIX_hydrolase_NudL_CS"/>
</dbReference>
<dbReference type="InterPro" id="IPR023735">
    <property type="entry name" value="Nudix_NudL"/>
</dbReference>
<dbReference type="NCBIfam" id="NF007980">
    <property type="entry name" value="PRK10707.1"/>
    <property type="match status" value="1"/>
</dbReference>
<dbReference type="PANTHER" id="PTHR12992:SF11">
    <property type="entry name" value="MITOCHONDRIAL COENZYME A DIPHOSPHATASE NUDT8"/>
    <property type="match status" value="1"/>
</dbReference>
<dbReference type="PANTHER" id="PTHR12992">
    <property type="entry name" value="NUDIX HYDROLASE"/>
    <property type="match status" value="1"/>
</dbReference>
<dbReference type="Pfam" id="PF00293">
    <property type="entry name" value="NUDIX"/>
    <property type="match status" value="1"/>
</dbReference>
<dbReference type="SUPFAM" id="SSF55811">
    <property type="entry name" value="Nudix"/>
    <property type="match status" value="1"/>
</dbReference>
<dbReference type="PROSITE" id="PS51462">
    <property type="entry name" value="NUDIX"/>
    <property type="match status" value="1"/>
</dbReference>
<dbReference type="PROSITE" id="PS01293">
    <property type="entry name" value="NUDIX_COA"/>
    <property type="match status" value="1"/>
</dbReference>
<name>NUDL_ECOLI</name>
<gene>
    <name evidence="1" type="primary">nudL</name>
    <name type="synonym">yeaB</name>
    <name type="ordered locus">b1813</name>
    <name type="ordered locus">JW1802</name>
</gene>
<keyword id="KW-0378">Hydrolase</keyword>
<keyword id="KW-0460">Magnesium</keyword>
<keyword id="KW-0464">Manganese</keyword>
<keyword id="KW-0479">Metal-binding</keyword>
<keyword id="KW-1185">Reference proteome</keyword>
<organism>
    <name type="scientific">Escherichia coli (strain K12)</name>
    <dbReference type="NCBI Taxonomy" id="83333"/>
    <lineage>
        <taxon>Bacteria</taxon>
        <taxon>Pseudomonadati</taxon>
        <taxon>Pseudomonadota</taxon>
        <taxon>Gammaproteobacteria</taxon>
        <taxon>Enterobacterales</taxon>
        <taxon>Enterobacteriaceae</taxon>
        <taxon>Escherichia</taxon>
    </lineage>
</organism>